<evidence type="ECO:0000255" key="1">
    <source>
        <dbReference type="HAMAP-Rule" id="MF_00240"/>
    </source>
</evidence>
<gene>
    <name evidence="1" type="primary">lolA</name>
    <name type="ordered locus">CbuK_1055</name>
</gene>
<comment type="function">
    <text evidence="1">Participates in the translocation of lipoproteins from the inner membrane to the outer membrane. Only forms a complex with a lipoprotein if the residue after the N-terminal Cys is not an aspartate (The Asp acts as a targeting signal to indicate that the lipoprotein should stay in the inner membrane).</text>
</comment>
<comment type="subunit">
    <text evidence="1">Monomer.</text>
</comment>
<comment type="subcellular location">
    <subcellularLocation>
        <location evidence="1">Periplasm</location>
    </subcellularLocation>
</comment>
<comment type="similarity">
    <text evidence="1">Belongs to the LolA family.</text>
</comment>
<feature type="signal peptide" evidence="1">
    <location>
        <begin position="1"/>
        <end position="24"/>
    </location>
</feature>
<feature type="chain" id="PRO_1000100713" description="Outer-membrane lipoprotein carrier protein">
    <location>
        <begin position="25"/>
        <end position="211"/>
    </location>
</feature>
<proteinExistence type="inferred from homology"/>
<dbReference type="EMBL" id="CP001020">
    <property type="protein sequence ID" value="ACJ20258.1"/>
    <property type="molecule type" value="Genomic_DNA"/>
</dbReference>
<dbReference type="RefSeq" id="WP_005770710.1">
    <property type="nucleotide sequence ID" value="NC_011528.1"/>
</dbReference>
<dbReference type="SMR" id="B6J7K9"/>
<dbReference type="KEGG" id="cbc:CbuK_1055"/>
<dbReference type="HOGENOM" id="CLU_087560_0_0_6"/>
<dbReference type="GO" id="GO:0030288">
    <property type="term" value="C:outer membrane-bounded periplasmic space"/>
    <property type="evidence" value="ECO:0007669"/>
    <property type="project" value="TreeGrafter"/>
</dbReference>
<dbReference type="GO" id="GO:0044874">
    <property type="term" value="P:lipoprotein localization to outer membrane"/>
    <property type="evidence" value="ECO:0007669"/>
    <property type="project" value="UniProtKB-UniRule"/>
</dbReference>
<dbReference type="GO" id="GO:0042953">
    <property type="term" value="P:lipoprotein transport"/>
    <property type="evidence" value="ECO:0007669"/>
    <property type="project" value="InterPro"/>
</dbReference>
<dbReference type="CDD" id="cd16325">
    <property type="entry name" value="LolA"/>
    <property type="match status" value="1"/>
</dbReference>
<dbReference type="Gene3D" id="2.50.20.10">
    <property type="entry name" value="Lipoprotein localisation LolA/LolB/LppX"/>
    <property type="match status" value="1"/>
</dbReference>
<dbReference type="HAMAP" id="MF_00240">
    <property type="entry name" value="LolA"/>
    <property type="match status" value="1"/>
</dbReference>
<dbReference type="InterPro" id="IPR029046">
    <property type="entry name" value="LolA/LolB/LppX"/>
</dbReference>
<dbReference type="InterPro" id="IPR004564">
    <property type="entry name" value="OM_lipoprot_carrier_LolA-like"/>
</dbReference>
<dbReference type="InterPro" id="IPR018323">
    <property type="entry name" value="OM_lipoprot_carrier_LolA_Pbac"/>
</dbReference>
<dbReference type="NCBIfam" id="TIGR00547">
    <property type="entry name" value="lolA"/>
    <property type="match status" value="1"/>
</dbReference>
<dbReference type="PANTHER" id="PTHR35869">
    <property type="entry name" value="OUTER-MEMBRANE LIPOPROTEIN CARRIER PROTEIN"/>
    <property type="match status" value="1"/>
</dbReference>
<dbReference type="PANTHER" id="PTHR35869:SF1">
    <property type="entry name" value="OUTER-MEMBRANE LIPOPROTEIN CARRIER PROTEIN"/>
    <property type="match status" value="1"/>
</dbReference>
<dbReference type="Pfam" id="PF03548">
    <property type="entry name" value="LolA"/>
    <property type="match status" value="1"/>
</dbReference>
<dbReference type="SUPFAM" id="SSF89392">
    <property type="entry name" value="Prokaryotic lipoproteins and lipoprotein localization factors"/>
    <property type="match status" value="1"/>
</dbReference>
<accession>B6J7K9</accession>
<keyword id="KW-0143">Chaperone</keyword>
<keyword id="KW-0574">Periplasm</keyword>
<keyword id="KW-0653">Protein transport</keyword>
<keyword id="KW-0732">Signal</keyword>
<keyword id="KW-0813">Transport</keyword>
<organism>
    <name type="scientific">Coxiella burnetii (strain CbuK_Q154)</name>
    <name type="common">Coxiella burnetii (strain Q154)</name>
    <dbReference type="NCBI Taxonomy" id="434924"/>
    <lineage>
        <taxon>Bacteria</taxon>
        <taxon>Pseudomonadati</taxon>
        <taxon>Pseudomonadota</taxon>
        <taxon>Gammaproteobacteria</taxon>
        <taxon>Legionellales</taxon>
        <taxon>Coxiellaceae</taxon>
        <taxon>Coxiella</taxon>
    </lineage>
</organism>
<sequence length="211" mass="23833">MNTIKILIGLLGIFLFSLSGIVSAQSDATTQLSQLLSNFRTYQAKFNQITFDGQDRVIQQSHGRVMIMRPGRFRWETDSPTKQIIITNGKTLWVYDVDLSQATQQPLAQKTNINPASLLSGSVKDLKQKFTITISPTSDAATFQLVPRLGKSLNFNWIRLKFSKKQLTEMTVLNNLDERSIFQFSQIKVNAPLSSTLFEFKPSRGIDVVKQ</sequence>
<protein>
    <recommendedName>
        <fullName evidence="1">Outer-membrane lipoprotein carrier protein</fullName>
    </recommendedName>
</protein>
<name>LOLA_COXB1</name>
<reference key="1">
    <citation type="journal article" date="2009" name="Infect. Immun.">
        <title>Comparative genomics reveal extensive transposon-mediated genomic plasticity and diversity among potential effector proteins within the genus Coxiella.</title>
        <authorList>
            <person name="Beare P.A."/>
            <person name="Unsworth N."/>
            <person name="Andoh M."/>
            <person name="Voth D.E."/>
            <person name="Omsland A."/>
            <person name="Gilk S.D."/>
            <person name="Williams K.P."/>
            <person name="Sobral B.W."/>
            <person name="Kupko J.J. III"/>
            <person name="Porcella S.F."/>
            <person name="Samuel J.E."/>
            <person name="Heinzen R.A."/>
        </authorList>
    </citation>
    <scope>NUCLEOTIDE SEQUENCE [LARGE SCALE GENOMIC DNA]</scope>
    <source>
        <strain>CbuK_Q154</strain>
    </source>
</reference>